<organism>
    <name type="scientific">Shigella boydii serotype 4 (strain Sb227)</name>
    <dbReference type="NCBI Taxonomy" id="300268"/>
    <lineage>
        <taxon>Bacteria</taxon>
        <taxon>Pseudomonadati</taxon>
        <taxon>Pseudomonadota</taxon>
        <taxon>Gammaproteobacteria</taxon>
        <taxon>Enterobacterales</taxon>
        <taxon>Enterobacteriaceae</taxon>
        <taxon>Shigella</taxon>
    </lineage>
</organism>
<comment type="function">
    <text evidence="1">Presumably involved in the processing and regular turnover of intracellular proteins. Catalyzes the removal of unsubstituted N-terminal amino acids from various peptides.</text>
</comment>
<comment type="catalytic activity">
    <reaction evidence="1">
        <text>Release of an N-terminal amino acid, Xaa-|-Yaa-, in which Xaa is preferably Leu, but may be other amino acids including Pro although not Arg or Lys, and Yaa may be Pro. Amino acid amides and methyl esters are also readily hydrolyzed, but rates on arylamides are exceedingly low.</text>
        <dbReference type="EC" id="3.4.11.1"/>
    </reaction>
</comment>
<comment type="catalytic activity">
    <reaction evidence="1">
        <text>Release of an N-terminal amino acid, preferentially leucine, but not glutamic or aspartic acids.</text>
        <dbReference type="EC" id="3.4.11.10"/>
    </reaction>
</comment>
<comment type="cofactor">
    <cofactor evidence="1">
        <name>Mn(2+)</name>
        <dbReference type="ChEBI" id="CHEBI:29035"/>
    </cofactor>
    <text evidence="1">Binds 2 manganese ions per subunit.</text>
</comment>
<comment type="subcellular location">
    <subcellularLocation>
        <location evidence="1">Cytoplasm</location>
    </subcellularLocation>
</comment>
<comment type="similarity">
    <text evidence="1">Belongs to the peptidase M17 family.</text>
</comment>
<reference key="1">
    <citation type="journal article" date="2005" name="Nucleic Acids Res.">
        <title>Genome dynamics and diversity of Shigella species, the etiologic agents of bacillary dysentery.</title>
        <authorList>
            <person name="Yang F."/>
            <person name="Yang J."/>
            <person name="Zhang X."/>
            <person name="Chen L."/>
            <person name="Jiang Y."/>
            <person name="Yan Y."/>
            <person name="Tang X."/>
            <person name="Wang J."/>
            <person name="Xiong Z."/>
            <person name="Dong J."/>
            <person name="Xue Y."/>
            <person name="Zhu Y."/>
            <person name="Xu X."/>
            <person name="Sun L."/>
            <person name="Chen S."/>
            <person name="Nie H."/>
            <person name="Peng J."/>
            <person name="Xu J."/>
            <person name="Wang Y."/>
            <person name="Yuan Z."/>
            <person name="Wen Y."/>
            <person name="Yao Z."/>
            <person name="Shen Y."/>
            <person name="Qiang B."/>
            <person name="Hou Y."/>
            <person name="Yu J."/>
            <person name="Jin Q."/>
        </authorList>
    </citation>
    <scope>NUCLEOTIDE SEQUENCE [LARGE SCALE GENOMIC DNA]</scope>
    <source>
        <strain>Sb227</strain>
    </source>
</reference>
<keyword id="KW-0031">Aminopeptidase</keyword>
<keyword id="KW-0963">Cytoplasm</keyword>
<keyword id="KW-0378">Hydrolase</keyword>
<keyword id="KW-0464">Manganese</keyword>
<keyword id="KW-0479">Metal-binding</keyword>
<keyword id="KW-0645">Protease</keyword>
<sequence length="503" mass="54865">MEFSVKSGSPEKQRSACIVVGVFEPRRLSPIAEQLDKISDGYISALLRRGELEGKPGQTLLLHHVPNVLSERILLIGCGKERELDERQYKQVIQKTINTLNDTGSMEAVCFLTELHVKGRNNYWKVRQAVETAKETLYSFDQLKTNKSEPRRPLRKMVFNVPTRRELTSGERAILHGLAIAAGIKAAKDLGNMPPNICNAAYLASQARQLADSYSKNVITRVIGEQQMKELGMHSYLAVGQGSQNESLMSVIEYKGNASEDARPIVLVGKGLTFDSGGISIKPSEGMDEMKYDMCGAAAVYGVMRMVAELQLPINVIGVLAGCENMPGGRAYRPGDVLTTMSGQTVEVLNTDAEGRLVLCDVLTYVERFEPEAVIDVATLTGACVIALGHHITGLMANHNPLAHELIAASEQSGDRAWRLPLGDEYQEQLESNFADMANIGGRPGGAITAGCFLSRFTRKYNWAHLDIAGTAWRSGKAKGATGRPVALLAQFLLNRAGFNGEE</sequence>
<proteinExistence type="inferred from homology"/>
<dbReference type="EC" id="3.4.11.1" evidence="1"/>
<dbReference type="EC" id="3.4.11.10" evidence="1"/>
<dbReference type="EMBL" id="CP000036">
    <property type="protein sequence ID" value="ABB68606.1"/>
    <property type="molecule type" value="Genomic_DNA"/>
</dbReference>
<dbReference type="RefSeq" id="WP_000397139.1">
    <property type="nucleotide sequence ID" value="NC_007613.1"/>
</dbReference>
<dbReference type="SMR" id="Q31TK2"/>
<dbReference type="MEROPS" id="M17.003"/>
<dbReference type="KEGG" id="sbo:SBO_4180"/>
<dbReference type="HOGENOM" id="CLU_013734_2_2_6"/>
<dbReference type="Proteomes" id="UP000007067">
    <property type="component" value="Chromosome"/>
</dbReference>
<dbReference type="GO" id="GO:0005737">
    <property type="term" value="C:cytoplasm"/>
    <property type="evidence" value="ECO:0007669"/>
    <property type="project" value="UniProtKB-SubCell"/>
</dbReference>
<dbReference type="GO" id="GO:0030145">
    <property type="term" value="F:manganese ion binding"/>
    <property type="evidence" value="ECO:0007669"/>
    <property type="project" value="UniProtKB-UniRule"/>
</dbReference>
<dbReference type="GO" id="GO:0070006">
    <property type="term" value="F:metalloaminopeptidase activity"/>
    <property type="evidence" value="ECO:0007669"/>
    <property type="project" value="InterPro"/>
</dbReference>
<dbReference type="GO" id="GO:0006508">
    <property type="term" value="P:proteolysis"/>
    <property type="evidence" value="ECO:0007669"/>
    <property type="project" value="UniProtKB-KW"/>
</dbReference>
<dbReference type="CDD" id="cd00433">
    <property type="entry name" value="Peptidase_M17"/>
    <property type="match status" value="1"/>
</dbReference>
<dbReference type="FunFam" id="3.40.220.10:FF:000001">
    <property type="entry name" value="Probable cytosol aminopeptidase"/>
    <property type="match status" value="1"/>
</dbReference>
<dbReference type="FunFam" id="3.40.630.10:FF:000004">
    <property type="entry name" value="Probable cytosol aminopeptidase"/>
    <property type="match status" value="1"/>
</dbReference>
<dbReference type="Gene3D" id="3.40.220.10">
    <property type="entry name" value="Leucine Aminopeptidase, subunit E, domain 1"/>
    <property type="match status" value="1"/>
</dbReference>
<dbReference type="Gene3D" id="3.40.630.10">
    <property type="entry name" value="Zn peptidases"/>
    <property type="match status" value="1"/>
</dbReference>
<dbReference type="HAMAP" id="MF_00181">
    <property type="entry name" value="Cytosol_peptidase_M17"/>
    <property type="match status" value="1"/>
</dbReference>
<dbReference type="InterPro" id="IPR011356">
    <property type="entry name" value="Leucine_aapep/pepB"/>
</dbReference>
<dbReference type="InterPro" id="IPR043472">
    <property type="entry name" value="Macro_dom-like"/>
</dbReference>
<dbReference type="InterPro" id="IPR000819">
    <property type="entry name" value="Peptidase_M17_C"/>
</dbReference>
<dbReference type="InterPro" id="IPR023042">
    <property type="entry name" value="Peptidase_M17_leu_NH2_pept"/>
</dbReference>
<dbReference type="InterPro" id="IPR008283">
    <property type="entry name" value="Peptidase_M17_N"/>
</dbReference>
<dbReference type="NCBIfam" id="NF002072">
    <property type="entry name" value="PRK00913.1-1"/>
    <property type="match status" value="1"/>
</dbReference>
<dbReference type="NCBIfam" id="NF002073">
    <property type="entry name" value="PRK00913.1-2"/>
    <property type="match status" value="1"/>
</dbReference>
<dbReference type="NCBIfam" id="NF002074">
    <property type="entry name" value="PRK00913.1-4"/>
    <property type="match status" value="1"/>
</dbReference>
<dbReference type="PANTHER" id="PTHR11963:SF23">
    <property type="entry name" value="CYTOSOL AMINOPEPTIDASE"/>
    <property type="match status" value="1"/>
</dbReference>
<dbReference type="PANTHER" id="PTHR11963">
    <property type="entry name" value="LEUCINE AMINOPEPTIDASE-RELATED"/>
    <property type="match status" value="1"/>
</dbReference>
<dbReference type="Pfam" id="PF00883">
    <property type="entry name" value="Peptidase_M17"/>
    <property type="match status" value="1"/>
</dbReference>
<dbReference type="Pfam" id="PF02789">
    <property type="entry name" value="Peptidase_M17_N"/>
    <property type="match status" value="1"/>
</dbReference>
<dbReference type="PRINTS" id="PR00481">
    <property type="entry name" value="LAMNOPPTDASE"/>
</dbReference>
<dbReference type="SUPFAM" id="SSF52949">
    <property type="entry name" value="Macro domain-like"/>
    <property type="match status" value="1"/>
</dbReference>
<dbReference type="SUPFAM" id="SSF53187">
    <property type="entry name" value="Zn-dependent exopeptidases"/>
    <property type="match status" value="1"/>
</dbReference>
<dbReference type="PROSITE" id="PS00631">
    <property type="entry name" value="CYTOSOL_AP"/>
    <property type="match status" value="1"/>
</dbReference>
<protein>
    <recommendedName>
        <fullName evidence="1">Probable cytosol aminopeptidase</fullName>
        <ecNumber evidence="1">3.4.11.1</ecNumber>
    </recommendedName>
    <alternativeName>
        <fullName evidence="1">Leucine aminopeptidase</fullName>
        <shortName evidence="1">LAP</shortName>
        <ecNumber evidence="1">3.4.11.10</ecNumber>
    </alternativeName>
    <alternativeName>
        <fullName evidence="1">Leucyl aminopeptidase</fullName>
    </alternativeName>
</protein>
<feature type="chain" id="PRO_1000019980" description="Probable cytosol aminopeptidase">
    <location>
        <begin position="1"/>
        <end position="503"/>
    </location>
</feature>
<feature type="active site" evidence="1">
    <location>
        <position position="282"/>
    </location>
</feature>
<feature type="active site" evidence="1">
    <location>
        <position position="356"/>
    </location>
</feature>
<feature type="binding site" evidence="1">
    <location>
        <position position="270"/>
    </location>
    <ligand>
        <name>Mn(2+)</name>
        <dbReference type="ChEBI" id="CHEBI:29035"/>
        <label>2</label>
    </ligand>
</feature>
<feature type="binding site" evidence="1">
    <location>
        <position position="275"/>
    </location>
    <ligand>
        <name>Mn(2+)</name>
        <dbReference type="ChEBI" id="CHEBI:29035"/>
        <label>1</label>
    </ligand>
</feature>
<feature type="binding site" evidence="1">
    <location>
        <position position="275"/>
    </location>
    <ligand>
        <name>Mn(2+)</name>
        <dbReference type="ChEBI" id="CHEBI:29035"/>
        <label>2</label>
    </ligand>
</feature>
<feature type="binding site" evidence="1">
    <location>
        <position position="293"/>
    </location>
    <ligand>
        <name>Mn(2+)</name>
        <dbReference type="ChEBI" id="CHEBI:29035"/>
        <label>2</label>
    </ligand>
</feature>
<feature type="binding site" evidence="1">
    <location>
        <position position="352"/>
    </location>
    <ligand>
        <name>Mn(2+)</name>
        <dbReference type="ChEBI" id="CHEBI:29035"/>
        <label>1</label>
    </ligand>
</feature>
<feature type="binding site" evidence="1">
    <location>
        <position position="354"/>
    </location>
    <ligand>
        <name>Mn(2+)</name>
        <dbReference type="ChEBI" id="CHEBI:29035"/>
        <label>1</label>
    </ligand>
</feature>
<feature type="binding site" evidence="1">
    <location>
        <position position="354"/>
    </location>
    <ligand>
        <name>Mn(2+)</name>
        <dbReference type="ChEBI" id="CHEBI:29035"/>
        <label>2</label>
    </ligand>
</feature>
<accession>Q31TK2</accession>
<name>AMPA_SHIBS</name>
<gene>
    <name evidence="1" type="primary">pepA</name>
    <name type="ordered locus">SBO_4180</name>
</gene>
<evidence type="ECO:0000255" key="1">
    <source>
        <dbReference type="HAMAP-Rule" id="MF_00181"/>
    </source>
</evidence>